<accession>Q2GD18</accession>
<feature type="chain" id="PRO_1000077166" description="ATP-dependent Clp protease ATP-binding subunit ClpX">
    <location>
        <begin position="1"/>
        <end position="400"/>
    </location>
</feature>
<feature type="domain" description="ClpX-type ZB" evidence="2">
    <location>
        <begin position="1"/>
        <end position="52"/>
    </location>
</feature>
<feature type="binding site" evidence="2">
    <location>
        <position position="11"/>
    </location>
    <ligand>
        <name>Zn(2+)</name>
        <dbReference type="ChEBI" id="CHEBI:29105"/>
    </ligand>
</feature>
<feature type="binding site" evidence="2">
    <location>
        <position position="14"/>
    </location>
    <ligand>
        <name>Zn(2+)</name>
        <dbReference type="ChEBI" id="CHEBI:29105"/>
    </ligand>
</feature>
<feature type="binding site" evidence="2">
    <location>
        <position position="33"/>
    </location>
    <ligand>
        <name>Zn(2+)</name>
        <dbReference type="ChEBI" id="CHEBI:29105"/>
    </ligand>
</feature>
<feature type="binding site" evidence="2">
    <location>
        <position position="36"/>
    </location>
    <ligand>
        <name>Zn(2+)</name>
        <dbReference type="ChEBI" id="CHEBI:29105"/>
    </ligand>
</feature>
<feature type="binding site" evidence="1">
    <location>
        <begin position="114"/>
        <end position="121"/>
    </location>
    <ligand>
        <name>ATP</name>
        <dbReference type="ChEBI" id="CHEBI:30616"/>
    </ligand>
</feature>
<reference key="1">
    <citation type="journal article" date="2006" name="PLoS Genet.">
        <title>Comparative genomics of emerging human ehrlichiosis agents.</title>
        <authorList>
            <person name="Dunning Hotopp J.C."/>
            <person name="Lin M."/>
            <person name="Madupu R."/>
            <person name="Crabtree J."/>
            <person name="Angiuoli S.V."/>
            <person name="Eisen J.A."/>
            <person name="Seshadri R."/>
            <person name="Ren Q."/>
            <person name="Wu M."/>
            <person name="Utterback T.R."/>
            <person name="Smith S."/>
            <person name="Lewis M."/>
            <person name="Khouri H."/>
            <person name="Zhang C."/>
            <person name="Niu H."/>
            <person name="Lin Q."/>
            <person name="Ohashi N."/>
            <person name="Zhi N."/>
            <person name="Nelson W.C."/>
            <person name="Brinkac L.M."/>
            <person name="Dodson R.J."/>
            <person name="Rosovitz M.J."/>
            <person name="Sundaram J.P."/>
            <person name="Daugherty S.C."/>
            <person name="Davidsen T."/>
            <person name="Durkin A.S."/>
            <person name="Gwinn M.L."/>
            <person name="Haft D.H."/>
            <person name="Selengut J.D."/>
            <person name="Sullivan S.A."/>
            <person name="Zafar N."/>
            <person name="Zhou L."/>
            <person name="Benahmed F."/>
            <person name="Forberger H."/>
            <person name="Halpin R."/>
            <person name="Mulligan S."/>
            <person name="Robinson J."/>
            <person name="White O."/>
            <person name="Rikihisa Y."/>
            <person name="Tettelin H."/>
        </authorList>
    </citation>
    <scope>NUCLEOTIDE SEQUENCE [LARGE SCALE GENOMIC DNA]</scope>
    <source>
        <strain>ATCC VR-367 / Miyayama</strain>
    </source>
</reference>
<evidence type="ECO:0000255" key="1">
    <source>
        <dbReference type="HAMAP-Rule" id="MF_00175"/>
    </source>
</evidence>
<evidence type="ECO:0000255" key="2">
    <source>
        <dbReference type="PROSITE-ProRule" id="PRU01250"/>
    </source>
</evidence>
<sequence>MVNKSDLVPKCSFCGETEDKVRKLVAGMSAFICDRCIALCSNVLSEEITLEAVSAERFTPKDIKKYFDSFITAQEDAKKILSVAVYNHYKCFVGNRLNSKDVEITKSNILIIGPTGCGKTLFAKTLARFLNVPFAICDATSITEAGYVGDDVENILRMLLQSADYNVEAAQKGIVYIDEIDKISRKSDSPSITRDVSGEGVQQALLKIMEGTIASVPPQGGRKHPNQETIQIDTTNILFICGGAFVGLDNIIANRQSINTMGFKSELQSKEVSPTILKKVEPEDLVKFGMIPEFVGRLPVIGVLDELTEDNLVEILSVPKNALVKQYVCLFGMDNIQLSFSDEALKTVARAAIKRKVGARGLRAIMESVLRNYMFELPSNKDVKTLIITEDIVRAEMANT</sequence>
<proteinExistence type="inferred from homology"/>
<name>CLPX_NEOSM</name>
<comment type="function">
    <text evidence="1">ATP-dependent specificity component of the Clp protease. It directs the protease to specific substrates. Can perform chaperone functions in the absence of ClpP.</text>
</comment>
<comment type="subunit">
    <text evidence="1">Component of the ClpX-ClpP complex. Forms a hexameric ring that, in the presence of ATP, binds to fourteen ClpP subunits assembled into a disk-like structure with a central cavity, resembling the structure of eukaryotic proteasomes.</text>
</comment>
<comment type="similarity">
    <text evidence="1">Belongs to the ClpX chaperone family.</text>
</comment>
<organism>
    <name type="scientific">Neorickettsia sennetsu (strain ATCC VR-367 / Miyayama)</name>
    <name type="common">Ehrlichia sennetsu</name>
    <dbReference type="NCBI Taxonomy" id="222891"/>
    <lineage>
        <taxon>Bacteria</taxon>
        <taxon>Pseudomonadati</taxon>
        <taxon>Pseudomonadota</taxon>
        <taxon>Alphaproteobacteria</taxon>
        <taxon>Rickettsiales</taxon>
        <taxon>Anaplasmataceae</taxon>
        <taxon>Neorickettsia</taxon>
    </lineage>
</organism>
<gene>
    <name evidence="1" type="primary">clpX</name>
    <name type="ordered locus">NSE_0753</name>
</gene>
<protein>
    <recommendedName>
        <fullName evidence="1">ATP-dependent Clp protease ATP-binding subunit ClpX</fullName>
    </recommendedName>
</protein>
<dbReference type="EMBL" id="CP000237">
    <property type="protein sequence ID" value="ABD45744.1"/>
    <property type="molecule type" value="Genomic_DNA"/>
</dbReference>
<dbReference type="RefSeq" id="WP_011452134.1">
    <property type="nucleotide sequence ID" value="NC_007798.1"/>
</dbReference>
<dbReference type="SMR" id="Q2GD18"/>
<dbReference type="STRING" id="222891.NSE_0753"/>
<dbReference type="KEGG" id="nse:NSE_0753"/>
<dbReference type="eggNOG" id="COG1219">
    <property type="taxonomic scope" value="Bacteria"/>
</dbReference>
<dbReference type="HOGENOM" id="CLU_014218_8_2_5"/>
<dbReference type="OrthoDB" id="9804062at2"/>
<dbReference type="Proteomes" id="UP000001942">
    <property type="component" value="Chromosome"/>
</dbReference>
<dbReference type="GO" id="GO:0009376">
    <property type="term" value="C:HslUV protease complex"/>
    <property type="evidence" value="ECO:0007669"/>
    <property type="project" value="TreeGrafter"/>
</dbReference>
<dbReference type="GO" id="GO:0005524">
    <property type="term" value="F:ATP binding"/>
    <property type="evidence" value="ECO:0007669"/>
    <property type="project" value="UniProtKB-UniRule"/>
</dbReference>
<dbReference type="GO" id="GO:0016887">
    <property type="term" value="F:ATP hydrolysis activity"/>
    <property type="evidence" value="ECO:0007669"/>
    <property type="project" value="InterPro"/>
</dbReference>
<dbReference type="GO" id="GO:0140662">
    <property type="term" value="F:ATP-dependent protein folding chaperone"/>
    <property type="evidence" value="ECO:0007669"/>
    <property type="project" value="InterPro"/>
</dbReference>
<dbReference type="GO" id="GO:0046983">
    <property type="term" value="F:protein dimerization activity"/>
    <property type="evidence" value="ECO:0007669"/>
    <property type="project" value="InterPro"/>
</dbReference>
<dbReference type="GO" id="GO:0051082">
    <property type="term" value="F:unfolded protein binding"/>
    <property type="evidence" value="ECO:0007669"/>
    <property type="project" value="UniProtKB-UniRule"/>
</dbReference>
<dbReference type="GO" id="GO:0008270">
    <property type="term" value="F:zinc ion binding"/>
    <property type="evidence" value="ECO:0007669"/>
    <property type="project" value="InterPro"/>
</dbReference>
<dbReference type="GO" id="GO:0051301">
    <property type="term" value="P:cell division"/>
    <property type="evidence" value="ECO:0007669"/>
    <property type="project" value="TreeGrafter"/>
</dbReference>
<dbReference type="GO" id="GO:0051603">
    <property type="term" value="P:proteolysis involved in protein catabolic process"/>
    <property type="evidence" value="ECO:0007669"/>
    <property type="project" value="TreeGrafter"/>
</dbReference>
<dbReference type="CDD" id="cd19497">
    <property type="entry name" value="RecA-like_ClpX"/>
    <property type="match status" value="1"/>
</dbReference>
<dbReference type="FunFam" id="1.10.8.60:FF:000002">
    <property type="entry name" value="ATP-dependent Clp protease ATP-binding subunit ClpX"/>
    <property type="match status" value="1"/>
</dbReference>
<dbReference type="FunFam" id="3.40.50.300:FF:000005">
    <property type="entry name" value="ATP-dependent Clp protease ATP-binding subunit ClpX"/>
    <property type="match status" value="1"/>
</dbReference>
<dbReference type="Gene3D" id="1.10.8.60">
    <property type="match status" value="1"/>
</dbReference>
<dbReference type="Gene3D" id="6.20.220.10">
    <property type="entry name" value="ClpX chaperone, C4-type zinc finger domain"/>
    <property type="match status" value="1"/>
</dbReference>
<dbReference type="Gene3D" id="3.40.50.300">
    <property type="entry name" value="P-loop containing nucleotide triphosphate hydrolases"/>
    <property type="match status" value="1"/>
</dbReference>
<dbReference type="HAMAP" id="MF_00175">
    <property type="entry name" value="ClpX"/>
    <property type="match status" value="1"/>
</dbReference>
<dbReference type="InterPro" id="IPR003593">
    <property type="entry name" value="AAA+_ATPase"/>
</dbReference>
<dbReference type="InterPro" id="IPR050052">
    <property type="entry name" value="ATP-dep_Clp_protease_ClpX"/>
</dbReference>
<dbReference type="InterPro" id="IPR003959">
    <property type="entry name" value="ATPase_AAA_core"/>
</dbReference>
<dbReference type="InterPro" id="IPR019489">
    <property type="entry name" value="Clp_ATPase_C"/>
</dbReference>
<dbReference type="InterPro" id="IPR004487">
    <property type="entry name" value="Clp_protease_ATP-bd_su_ClpX"/>
</dbReference>
<dbReference type="InterPro" id="IPR046425">
    <property type="entry name" value="ClpX_bact"/>
</dbReference>
<dbReference type="InterPro" id="IPR027417">
    <property type="entry name" value="P-loop_NTPase"/>
</dbReference>
<dbReference type="InterPro" id="IPR010603">
    <property type="entry name" value="Znf_CppX_C4"/>
</dbReference>
<dbReference type="InterPro" id="IPR038366">
    <property type="entry name" value="Znf_CppX_C4_sf"/>
</dbReference>
<dbReference type="NCBIfam" id="TIGR00382">
    <property type="entry name" value="clpX"/>
    <property type="match status" value="1"/>
</dbReference>
<dbReference type="NCBIfam" id="NF003745">
    <property type="entry name" value="PRK05342.1"/>
    <property type="match status" value="1"/>
</dbReference>
<dbReference type="PANTHER" id="PTHR48102:SF7">
    <property type="entry name" value="ATP-DEPENDENT CLP PROTEASE ATP-BINDING SUBUNIT CLPX-LIKE, MITOCHONDRIAL"/>
    <property type="match status" value="1"/>
</dbReference>
<dbReference type="PANTHER" id="PTHR48102">
    <property type="entry name" value="ATP-DEPENDENT CLP PROTEASE ATP-BINDING SUBUNIT CLPX-LIKE, MITOCHONDRIAL-RELATED"/>
    <property type="match status" value="1"/>
</dbReference>
<dbReference type="Pfam" id="PF07724">
    <property type="entry name" value="AAA_2"/>
    <property type="match status" value="1"/>
</dbReference>
<dbReference type="Pfam" id="PF10431">
    <property type="entry name" value="ClpB_D2-small"/>
    <property type="match status" value="1"/>
</dbReference>
<dbReference type="Pfam" id="PF06689">
    <property type="entry name" value="zf-C4_ClpX"/>
    <property type="match status" value="1"/>
</dbReference>
<dbReference type="SMART" id="SM00382">
    <property type="entry name" value="AAA"/>
    <property type="match status" value="1"/>
</dbReference>
<dbReference type="SMART" id="SM01086">
    <property type="entry name" value="ClpB_D2-small"/>
    <property type="match status" value="1"/>
</dbReference>
<dbReference type="SMART" id="SM00994">
    <property type="entry name" value="zf-C4_ClpX"/>
    <property type="match status" value="1"/>
</dbReference>
<dbReference type="SUPFAM" id="SSF57716">
    <property type="entry name" value="Glucocorticoid receptor-like (DNA-binding domain)"/>
    <property type="match status" value="1"/>
</dbReference>
<dbReference type="SUPFAM" id="SSF52540">
    <property type="entry name" value="P-loop containing nucleoside triphosphate hydrolases"/>
    <property type="match status" value="1"/>
</dbReference>
<dbReference type="PROSITE" id="PS51902">
    <property type="entry name" value="CLPX_ZB"/>
    <property type="match status" value="1"/>
</dbReference>
<keyword id="KW-0067">ATP-binding</keyword>
<keyword id="KW-0143">Chaperone</keyword>
<keyword id="KW-0479">Metal-binding</keyword>
<keyword id="KW-0547">Nucleotide-binding</keyword>
<keyword id="KW-0862">Zinc</keyword>